<name>CITD_ECO45</name>
<evidence type="ECO:0000255" key="1">
    <source>
        <dbReference type="HAMAP-Rule" id="MF_00805"/>
    </source>
</evidence>
<accession>B7MF30</accession>
<dbReference type="EMBL" id="CU928161">
    <property type="protein sequence ID" value="CAR01999.1"/>
    <property type="molecule type" value="Genomic_DNA"/>
</dbReference>
<dbReference type="RefSeq" id="WP_000700703.1">
    <property type="nucleotide sequence ID" value="NC_011742.1"/>
</dbReference>
<dbReference type="SMR" id="B7MF30"/>
<dbReference type="GeneID" id="93776868"/>
<dbReference type="KEGG" id="ecz:ECS88_0658"/>
<dbReference type="HOGENOM" id="CLU_158489_0_0_6"/>
<dbReference type="Proteomes" id="UP000000747">
    <property type="component" value="Chromosome"/>
</dbReference>
<dbReference type="GO" id="GO:0005737">
    <property type="term" value="C:cytoplasm"/>
    <property type="evidence" value="ECO:0007669"/>
    <property type="project" value="UniProtKB-SubCell"/>
</dbReference>
<dbReference type="HAMAP" id="MF_00805">
    <property type="entry name" value="CitD"/>
    <property type="match status" value="1"/>
</dbReference>
<dbReference type="InterPro" id="IPR006495">
    <property type="entry name" value="CitD"/>
</dbReference>
<dbReference type="InterPro" id="IPR023439">
    <property type="entry name" value="Mal_deCO2ase/Cit_lyase_ACP"/>
</dbReference>
<dbReference type="NCBIfam" id="TIGR01608">
    <property type="entry name" value="citD"/>
    <property type="match status" value="1"/>
</dbReference>
<dbReference type="NCBIfam" id="NF009726">
    <property type="entry name" value="PRK13253.1"/>
    <property type="match status" value="1"/>
</dbReference>
<dbReference type="Pfam" id="PF06857">
    <property type="entry name" value="ACP"/>
    <property type="match status" value="1"/>
</dbReference>
<dbReference type="PIRSF" id="PIRSF002736">
    <property type="entry name" value="Citrt_lyas_gamma"/>
    <property type="match status" value="1"/>
</dbReference>
<reference key="1">
    <citation type="journal article" date="2009" name="PLoS Genet.">
        <title>Organised genome dynamics in the Escherichia coli species results in highly diverse adaptive paths.</title>
        <authorList>
            <person name="Touchon M."/>
            <person name="Hoede C."/>
            <person name="Tenaillon O."/>
            <person name="Barbe V."/>
            <person name="Baeriswyl S."/>
            <person name="Bidet P."/>
            <person name="Bingen E."/>
            <person name="Bonacorsi S."/>
            <person name="Bouchier C."/>
            <person name="Bouvet O."/>
            <person name="Calteau A."/>
            <person name="Chiapello H."/>
            <person name="Clermont O."/>
            <person name="Cruveiller S."/>
            <person name="Danchin A."/>
            <person name="Diard M."/>
            <person name="Dossat C."/>
            <person name="Karoui M.E."/>
            <person name="Frapy E."/>
            <person name="Garry L."/>
            <person name="Ghigo J.M."/>
            <person name="Gilles A.M."/>
            <person name="Johnson J."/>
            <person name="Le Bouguenec C."/>
            <person name="Lescat M."/>
            <person name="Mangenot S."/>
            <person name="Martinez-Jehanne V."/>
            <person name="Matic I."/>
            <person name="Nassif X."/>
            <person name="Oztas S."/>
            <person name="Petit M.A."/>
            <person name="Pichon C."/>
            <person name="Rouy Z."/>
            <person name="Ruf C.S."/>
            <person name="Schneider D."/>
            <person name="Tourret J."/>
            <person name="Vacherie B."/>
            <person name="Vallenet D."/>
            <person name="Medigue C."/>
            <person name="Rocha E.P.C."/>
            <person name="Denamur E."/>
        </authorList>
    </citation>
    <scope>NUCLEOTIDE SEQUENCE [LARGE SCALE GENOMIC DNA]</scope>
    <source>
        <strain>S88 / ExPEC</strain>
    </source>
</reference>
<sequence>MKINQPAVAGTLESGDVMIRIAPLDTQDIDLQINSSVEKQFGDAIRTTILDVLARYNVRGVQLNVDDKGALDCILRARLEALLARASGIPALPWEDCQ</sequence>
<proteinExistence type="inferred from homology"/>
<feature type="chain" id="PRO_1000133964" description="Citrate lyase acyl carrier protein">
    <location>
        <begin position="1"/>
        <end position="98"/>
    </location>
</feature>
<feature type="modified residue" description="O-(phosphoribosyl dephospho-coenzyme A)serine" evidence="1">
    <location>
        <position position="14"/>
    </location>
</feature>
<gene>
    <name evidence="1" type="primary">citD</name>
    <name type="ordered locus">ECS88_0658</name>
</gene>
<protein>
    <recommendedName>
        <fullName evidence="1">Citrate lyase acyl carrier protein</fullName>
    </recommendedName>
    <alternativeName>
        <fullName evidence="1">Citrate lyase gamma chain</fullName>
    </alternativeName>
</protein>
<comment type="function">
    <text evidence="1">Covalent carrier of the coenzyme of citrate lyase.</text>
</comment>
<comment type="subunit">
    <text evidence="1">Oligomer with a subunit composition of (alpha,beta,gamma)6.</text>
</comment>
<comment type="subcellular location">
    <subcellularLocation>
        <location evidence="1">Cytoplasm</location>
    </subcellularLocation>
</comment>
<comment type="similarity">
    <text evidence="1">Belongs to the CitD family.</text>
</comment>
<keyword id="KW-0963">Cytoplasm</keyword>
<keyword id="KW-0597">Phosphoprotein</keyword>
<keyword id="KW-1185">Reference proteome</keyword>
<organism>
    <name type="scientific">Escherichia coli O45:K1 (strain S88 / ExPEC)</name>
    <dbReference type="NCBI Taxonomy" id="585035"/>
    <lineage>
        <taxon>Bacteria</taxon>
        <taxon>Pseudomonadati</taxon>
        <taxon>Pseudomonadota</taxon>
        <taxon>Gammaproteobacteria</taxon>
        <taxon>Enterobacterales</taxon>
        <taxon>Enterobacteriaceae</taxon>
        <taxon>Escherichia</taxon>
    </lineage>
</organism>